<proteinExistence type="evidence at transcript level"/>
<accession>Q5ZM20</accession>
<dbReference type="EMBL" id="AJ719564">
    <property type="protein sequence ID" value="CAG31223.1"/>
    <property type="molecule type" value="mRNA"/>
</dbReference>
<dbReference type="RefSeq" id="NP_001006174.1">
    <property type="nucleotide sequence ID" value="NM_001006174.1"/>
</dbReference>
<dbReference type="RefSeq" id="XP_015149718.1">
    <property type="nucleotide sequence ID" value="XM_015294232.1"/>
</dbReference>
<dbReference type="RefSeq" id="XP_046783427.1">
    <property type="nucleotide sequence ID" value="XM_046927471.1"/>
</dbReference>
<dbReference type="SMR" id="Q5ZM20"/>
<dbReference type="FunCoup" id="Q5ZM20">
    <property type="interactions" value="509"/>
</dbReference>
<dbReference type="STRING" id="9031.ENSGALP00000011578"/>
<dbReference type="PaxDb" id="9031-ENSGALP00000011578"/>
<dbReference type="Ensembl" id="ENSGALT00010046529.1">
    <property type="protein sequence ID" value="ENSGALP00010027701.1"/>
    <property type="gene ID" value="ENSGALG00010019248.1"/>
</dbReference>
<dbReference type="GeneID" id="416628"/>
<dbReference type="KEGG" id="gga:416628"/>
<dbReference type="CTD" id="116028"/>
<dbReference type="VEuPathDB" id="HostDB:geneid_416628"/>
<dbReference type="eggNOG" id="ENOG502S4AN">
    <property type="taxonomic scope" value="Eukaryota"/>
</dbReference>
<dbReference type="GeneTree" id="ENSGT00390000001653"/>
<dbReference type="HOGENOM" id="CLU_147474_0_0_1"/>
<dbReference type="InParanoid" id="Q5ZM20"/>
<dbReference type="OrthoDB" id="10024265at2759"/>
<dbReference type="PhylomeDB" id="Q5ZM20"/>
<dbReference type="Reactome" id="R-GGA-5685938">
    <property type="pathway name" value="HDR through Single Strand Annealing (SSA)"/>
</dbReference>
<dbReference type="Reactome" id="R-GGA-5685942">
    <property type="pathway name" value="HDR through Homologous Recombination (HRR)"/>
</dbReference>
<dbReference type="Reactome" id="R-GGA-5693568">
    <property type="pathway name" value="Resolution of D-loop Structures through Holliday Junction Intermediates"/>
</dbReference>
<dbReference type="Reactome" id="R-GGA-5693579">
    <property type="pathway name" value="Homologous DNA Pairing and Strand Exchange"/>
</dbReference>
<dbReference type="Reactome" id="R-GGA-5693607">
    <property type="pathway name" value="Processing of DNA double-strand break ends"/>
</dbReference>
<dbReference type="Reactome" id="R-GGA-5693616">
    <property type="pathway name" value="Presynaptic phase of homologous DNA pairing and strand exchange"/>
</dbReference>
<dbReference type="PRO" id="PR:Q5ZM20"/>
<dbReference type="Proteomes" id="UP000000539">
    <property type="component" value="Chromosome 14"/>
</dbReference>
<dbReference type="Bgee" id="ENSGALG00000007155">
    <property type="expression patterns" value="Expressed in heart and 14 other cell types or tissues"/>
</dbReference>
<dbReference type="GO" id="GO:0005829">
    <property type="term" value="C:cytosol"/>
    <property type="evidence" value="ECO:0000318"/>
    <property type="project" value="GO_Central"/>
</dbReference>
<dbReference type="GO" id="GO:0016607">
    <property type="term" value="C:nuclear speck"/>
    <property type="evidence" value="ECO:0000318"/>
    <property type="project" value="GO_Central"/>
</dbReference>
<dbReference type="GO" id="GO:0031422">
    <property type="term" value="C:RecQ family helicase-topoisomerase III complex"/>
    <property type="evidence" value="ECO:0007669"/>
    <property type="project" value="Ensembl"/>
</dbReference>
<dbReference type="GO" id="GO:0003677">
    <property type="term" value="F:DNA binding"/>
    <property type="evidence" value="ECO:0007669"/>
    <property type="project" value="UniProtKB-KW"/>
</dbReference>
<dbReference type="GO" id="GO:0006281">
    <property type="term" value="P:DNA repair"/>
    <property type="evidence" value="ECO:0000318"/>
    <property type="project" value="GO_Central"/>
</dbReference>
<dbReference type="GO" id="GO:0006260">
    <property type="term" value="P:DNA replication"/>
    <property type="evidence" value="ECO:0007669"/>
    <property type="project" value="UniProtKB-KW"/>
</dbReference>
<dbReference type="GO" id="GO:0000724">
    <property type="term" value="P:double-strand break repair via homologous recombination"/>
    <property type="evidence" value="ECO:0007669"/>
    <property type="project" value="Ensembl"/>
</dbReference>
<dbReference type="GO" id="GO:0043007">
    <property type="term" value="P:maintenance of rDNA"/>
    <property type="evidence" value="ECO:0000318"/>
    <property type="project" value="GO_Central"/>
</dbReference>
<dbReference type="GO" id="GO:2000042">
    <property type="term" value="P:negative regulation of double-strand break repair via homologous recombination"/>
    <property type="evidence" value="ECO:0000318"/>
    <property type="project" value="GO_Central"/>
</dbReference>
<dbReference type="GO" id="GO:0033045">
    <property type="term" value="P:regulation of sister chromatid segregation"/>
    <property type="evidence" value="ECO:0000318"/>
    <property type="project" value="GO_Central"/>
</dbReference>
<dbReference type="GO" id="GO:0071139">
    <property type="term" value="P:resolution of DNA recombination intermediates"/>
    <property type="evidence" value="ECO:0007669"/>
    <property type="project" value="Ensembl"/>
</dbReference>
<dbReference type="FunFam" id="2.40.50.140:FF:000224">
    <property type="entry name" value="RecQ mediated genome instability 2"/>
    <property type="match status" value="1"/>
</dbReference>
<dbReference type="Gene3D" id="2.40.50.140">
    <property type="entry name" value="Nucleic acid-binding proteins"/>
    <property type="match status" value="1"/>
</dbReference>
<dbReference type="InterPro" id="IPR012340">
    <property type="entry name" value="NA-bd_OB-fold"/>
</dbReference>
<dbReference type="InterPro" id="IPR032245">
    <property type="entry name" value="RMI2"/>
</dbReference>
<dbReference type="PANTHER" id="PTHR33962:SF1">
    <property type="entry name" value="RECQ-MEDIATED GENOME INSTABILITY PROTEIN 2"/>
    <property type="match status" value="1"/>
</dbReference>
<dbReference type="PANTHER" id="PTHR33962">
    <property type="entry name" value="RECQ-MEDIATED GENOME INSTABILITY PROTEIN 2 RMI2"/>
    <property type="match status" value="1"/>
</dbReference>
<dbReference type="Pfam" id="PF16100">
    <property type="entry name" value="RMI2"/>
    <property type="match status" value="1"/>
</dbReference>
<sequence length="137" mass="14672">MAGEAASPPLKVLAAQLRAAGRGAGGTWRLSRTETGRAPLCLRAVWMQGTVLQVERGGGGSARLRDGSGHFTVLGVEDVPRGRPCLSAGKYVMVMGMVRACSPEPVLRAIKMTDLSENPVHEEMWGLEVEELHRVIP</sequence>
<organism>
    <name type="scientific">Gallus gallus</name>
    <name type="common">Chicken</name>
    <dbReference type="NCBI Taxonomy" id="9031"/>
    <lineage>
        <taxon>Eukaryota</taxon>
        <taxon>Metazoa</taxon>
        <taxon>Chordata</taxon>
        <taxon>Craniata</taxon>
        <taxon>Vertebrata</taxon>
        <taxon>Euteleostomi</taxon>
        <taxon>Archelosauria</taxon>
        <taxon>Archosauria</taxon>
        <taxon>Dinosauria</taxon>
        <taxon>Saurischia</taxon>
        <taxon>Theropoda</taxon>
        <taxon>Coelurosauria</taxon>
        <taxon>Aves</taxon>
        <taxon>Neognathae</taxon>
        <taxon>Galloanserae</taxon>
        <taxon>Galliformes</taxon>
        <taxon>Phasianidae</taxon>
        <taxon>Phasianinae</taxon>
        <taxon>Gallus</taxon>
    </lineage>
</organism>
<gene>
    <name type="primary">RMI2</name>
    <name type="ORF">RCJMB04_3g8</name>
</gene>
<reference key="1">
    <citation type="journal article" date="2005" name="Genome Biol.">
        <title>Full-length cDNAs from chicken bursal lymphocytes to facilitate gene function analysis.</title>
        <authorList>
            <person name="Caldwell R.B."/>
            <person name="Kierzek A.M."/>
            <person name="Arakawa H."/>
            <person name="Bezzubov Y."/>
            <person name="Zaim J."/>
            <person name="Fiedler P."/>
            <person name="Kutter S."/>
            <person name="Blagodatski A."/>
            <person name="Kostovska D."/>
            <person name="Koter M."/>
            <person name="Plachy J."/>
            <person name="Carninci P."/>
            <person name="Hayashizaki Y."/>
            <person name="Buerstedde J.-M."/>
        </authorList>
    </citation>
    <scope>NUCLEOTIDE SEQUENCE [LARGE SCALE MRNA]</scope>
    <source>
        <strain>CB</strain>
        <tissue>Bursa of Fabricius</tissue>
    </source>
</reference>
<reference key="2">
    <citation type="journal article" date="2008" name="Genes Dev.">
        <title>RMI, a new OB-fold complex essential for Bloom syndrome protein to maintain genome stability.</title>
        <authorList>
            <person name="Xu D."/>
            <person name="Guo R."/>
            <person name="Sobeck A."/>
            <person name="Bachrati C.Z."/>
            <person name="Yang J."/>
            <person name="Enomoto T."/>
            <person name="Brown G.W."/>
            <person name="Hoatlin M.E."/>
            <person name="Hickson I.D."/>
            <person name="Wang W."/>
        </authorList>
    </citation>
    <scope>FUNCTION</scope>
</reference>
<keyword id="KW-0235">DNA replication</keyword>
<keyword id="KW-0238">DNA-binding</keyword>
<keyword id="KW-0539">Nucleus</keyword>
<keyword id="KW-1185">Reference proteome</keyword>
<name>RMI2_CHICK</name>
<feature type="chain" id="PRO_0000297579" description="RecQ-mediated genome instability protein 2">
    <location>
        <begin position="1"/>
        <end position="137"/>
    </location>
</feature>
<feature type="DNA-binding region" description="OB">
    <location>
        <begin position="45"/>
        <end position="115"/>
    </location>
</feature>
<protein>
    <recommendedName>
        <fullName>RecQ-mediated genome instability protein 2</fullName>
    </recommendedName>
</protein>
<evidence type="ECO:0000250" key="1"/>
<evidence type="ECO:0000250" key="2">
    <source>
        <dbReference type="UniProtKB" id="Q96E14"/>
    </source>
</evidence>
<evidence type="ECO:0000269" key="3">
    <source>
    </source>
</evidence>
<evidence type="ECO:0000305" key="4"/>
<comment type="function">
    <text evidence="2 3">Essential component of the RMI complex, a complex that plays an important role in the processing of homologous recombination intermediates. It is required to regulate sister chromatid segregation and to limit DNA crossover. Essential for the stability, localization, and function of BLM, TOP3A, and complexes containing BLM. In the RMI complex, it is required to target BLM to chromatin and stress-induced nuclear foci and mitotic phosphorylation of BLM.</text>
</comment>
<comment type="subunit">
    <text evidence="1">Component of the RMI complex, containing at least TOP3A, RMI1 and RMI2. The RMI complex interacts with BLM (By similarity).</text>
</comment>
<comment type="subcellular location">
    <subcellularLocation>
        <location evidence="1">Nucleus</location>
    </subcellularLocation>
</comment>
<comment type="similarity">
    <text evidence="4">Belongs to the RMI2 family.</text>
</comment>